<evidence type="ECO:0000305" key="1"/>
<feature type="chain" id="PRO_0000451932" description="DinI-like protein">
    <location>
        <begin position="1"/>
        <end position="82"/>
    </location>
</feature>
<proteinExistence type="inferred from homology"/>
<protein>
    <recommendedName>
        <fullName evidence="1">DinI-like protein</fullName>
    </recommendedName>
</protein>
<dbReference type="EMBL" id="AP000400">
    <property type="protein sequence ID" value="BAB19557.1"/>
    <property type="molecule type" value="Genomic_DNA"/>
</dbReference>
<dbReference type="SMR" id="P0DUE5"/>
<dbReference type="Proteomes" id="UP000293596">
    <property type="component" value="Genome"/>
</dbReference>
<dbReference type="GO" id="GO:0006281">
    <property type="term" value="P:DNA repair"/>
    <property type="evidence" value="ECO:0007669"/>
    <property type="project" value="UniProtKB-KW"/>
</dbReference>
<dbReference type="GO" id="GO:0009432">
    <property type="term" value="P:SOS response"/>
    <property type="evidence" value="ECO:0007669"/>
    <property type="project" value="TreeGrafter"/>
</dbReference>
<dbReference type="Gene3D" id="3.30.910.10">
    <property type="entry name" value="DinI-like"/>
    <property type="match status" value="1"/>
</dbReference>
<dbReference type="InterPro" id="IPR036687">
    <property type="entry name" value="DinI-like_sf"/>
</dbReference>
<dbReference type="InterPro" id="IPR010391">
    <property type="entry name" value="DNA_damage-inducible_DinI-like"/>
</dbReference>
<dbReference type="PANTHER" id="PTHR36572:SF2">
    <property type="entry name" value="DNA DAMAGE-INDUCIBLE PROTEIN I"/>
    <property type="match status" value="1"/>
</dbReference>
<dbReference type="PANTHER" id="PTHR36572">
    <property type="entry name" value="DNA DAMAGE-INDUCIBLE PROTEIN I-RELATED"/>
    <property type="match status" value="1"/>
</dbReference>
<dbReference type="Pfam" id="PF06183">
    <property type="entry name" value="DinI"/>
    <property type="match status" value="1"/>
</dbReference>
<dbReference type="SUPFAM" id="SSF54857">
    <property type="entry name" value="DNA damage-inducible protein DinI"/>
    <property type="match status" value="1"/>
</dbReference>
<organism>
    <name type="scientific">Enterobacteria phage VT1-Sakai</name>
    <dbReference type="NCBI Taxonomy" id="462299"/>
    <lineage>
        <taxon>Viruses</taxon>
        <taxon>Duplodnaviria</taxon>
        <taxon>Heunggongvirae</taxon>
        <taxon>Uroviricota</taxon>
        <taxon>Caudoviricetes</taxon>
    </lineage>
</organism>
<name>DINI1_BPVT1</name>
<keyword id="KW-0227">DNA damage</keyword>
<keyword id="KW-0234">DNA repair</keyword>
<keyword id="KW-1185">Reference proteome</keyword>
<comment type="similarity">
    <text evidence="1">Belongs to the DinI family.</text>
</comment>
<sequence>MRVEICIAKEKITKMPNGAVDALKEELTRRISKRYDDVEVIVKATSNDGLSVTRTADKDSAKTFVQETLKDTWESADEWFVR</sequence>
<accession>P0DUE5</accession>
<accession>Q9EYF1</accession>
<reference key="1">
    <citation type="journal article" date="2000" name="Gene">
        <title>Complete nucleotide sequence of the prophage VT1-Sakai carrying the Shiga toxin 1 genes of the enterohemorrhagic Escherichia coli O157:H7 strain derived from the Sakai outbreak.</title>
        <authorList>
            <person name="Yokoyama K."/>
            <person name="Makino K."/>
            <person name="Kubota Y."/>
            <person name="Watanabe M."/>
            <person name="Kimura S."/>
            <person name="Yutsudo C.H."/>
            <person name="Kurokawa K."/>
            <person name="Ishii K."/>
            <person name="Hattori M."/>
            <person name="Tatsuno I."/>
            <person name="Abe H."/>
            <person name="Yoh M."/>
            <person name="Iida T."/>
            <person name="Ohnishi M."/>
            <person name="Hayashi T."/>
            <person name="Yasunaga T."/>
            <person name="Honda T."/>
            <person name="Sasakawa C."/>
            <person name="Shinagawa H."/>
        </authorList>
    </citation>
    <scope>NUCLEOTIDE SEQUENCE [LARGE SCALE GENOMIC DNA]</scope>
</reference>